<organism>
    <name type="scientific">Streptococcus pyogenes serotype M18 (strain MGAS8232)</name>
    <dbReference type="NCBI Taxonomy" id="186103"/>
    <lineage>
        <taxon>Bacteria</taxon>
        <taxon>Bacillati</taxon>
        <taxon>Bacillota</taxon>
        <taxon>Bacilli</taxon>
        <taxon>Lactobacillales</taxon>
        <taxon>Streptococcaceae</taxon>
        <taxon>Streptococcus</taxon>
    </lineage>
</organism>
<evidence type="ECO:0000255" key="1">
    <source>
        <dbReference type="HAMAP-Rule" id="MF_00294"/>
    </source>
</evidence>
<evidence type="ECO:0000305" key="2"/>
<protein>
    <recommendedName>
        <fullName evidence="1">Large ribosomal subunit protein bL33</fullName>
    </recommendedName>
    <alternativeName>
        <fullName evidence="2">50S ribosomal protein L33</fullName>
    </alternativeName>
</protein>
<proteinExistence type="inferred from homology"/>
<accession>P66237</accession>
<accession>Q99XK7</accession>
<name>RL33_STRP8</name>
<reference key="1">
    <citation type="journal article" date="2002" name="Proc. Natl. Acad. Sci. U.S.A.">
        <title>Genome sequence and comparative microarray analysis of serotype M18 group A Streptococcus strains associated with acute rheumatic fever outbreaks.</title>
        <authorList>
            <person name="Smoot J.C."/>
            <person name="Barbian K.D."/>
            <person name="Van Gompel J.J."/>
            <person name="Smoot L.M."/>
            <person name="Chaussee M.S."/>
            <person name="Sylva G.L."/>
            <person name="Sturdevant D.E."/>
            <person name="Ricklefs S.M."/>
            <person name="Porcella S.F."/>
            <person name="Parkins L.D."/>
            <person name="Beres S.B."/>
            <person name="Campbell D.S."/>
            <person name="Smith T.M."/>
            <person name="Zhang Q."/>
            <person name="Kapur V."/>
            <person name="Daly J.A."/>
            <person name="Veasy L.G."/>
            <person name="Musser J.M."/>
        </authorList>
    </citation>
    <scope>NUCLEOTIDE SEQUENCE [LARGE SCALE GENOMIC DNA]</scope>
    <source>
        <strain>MGAS8232</strain>
    </source>
</reference>
<keyword id="KW-0687">Ribonucleoprotein</keyword>
<keyword id="KW-0689">Ribosomal protein</keyword>
<sequence>MRVNITLEHKESGERLYLTSKNKRNTPDRLQLKKYSPKLRKHVTFTEVK</sequence>
<gene>
    <name evidence="1" type="primary">rpmG</name>
    <name type="ordered locus">spyM18_2197</name>
</gene>
<comment type="similarity">
    <text evidence="1">Belongs to the bacterial ribosomal protein bL33 family.</text>
</comment>
<feature type="chain" id="PRO_0000170253" description="Large ribosomal subunit protein bL33">
    <location>
        <begin position="1"/>
        <end position="49"/>
    </location>
</feature>
<dbReference type="EMBL" id="AE009949">
    <property type="protein sequence ID" value="AAL98636.1"/>
    <property type="molecule type" value="Genomic_DNA"/>
</dbReference>
<dbReference type="RefSeq" id="WP_002982147.1">
    <property type="nucleotide sequence ID" value="NC_003485.1"/>
</dbReference>
<dbReference type="SMR" id="P66237"/>
<dbReference type="GeneID" id="93827114"/>
<dbReference type="KEGG" id="spm:spyM18_2197"/>
<dbReference type="HOGENOM" id="CLU_190949_3_2_9"/>
<dbReference type="GO" id="GO:0005737">
    <property type="term" value="C:cytoplasm"/>
    <property type="evidence" value="ECO:0007669"/>
    <property type="project" value="UniProtKB-ARBA"/>
</dbReference>
<dbReference type="GO" id="GO:1990904">
    <property type="term" value="C:ribonucleoprotein complex"/>
    <property type="evidence" value="ECO:0007669"/>
    <property type="project" value="UniProtKB-KW"/>
</dbReference>
<dbReference type="GO" id="GO:0005840">
    <property type="term" value="C:ribosome"/>
    <property type="evidence" value="ECO:0007669"/>
    <property type="project" value="UniProtKB-KW"/>
</dbReference>
<dbReference type="GO" id="GO:0003735">
    <property type="term" value="F:structural constituent of ribosome"/>
    <property type="evidence" value="ECO:0007669"/>
    <property type="project" value="InterPro"/>
</dbReference>
<dbReference type="GO" id="GO:0006412">
    <property type="term" value="P:translation"/>
    <property type="evidence" value="ECO:0007669"/>
    <property type="project" value="UniProtKB-UniRule"/>
</dbReference>
<dbReference type="Gene3D" id="2.20.28.120">
    <property type="entry name" value="Ribosomal protein L33"/>
    <property type="match status" value="1"/>
</dbReference>
<dbReference type="HAMAP" id="MF_00294">
    <property type="entry name" value="Ribosomal_bL33"/>
    <property type="match status" value="1"/>
</dbReference>
<dbReference type="InterPro" id="IPR001705">
    <property type="entry name" value="Ribosomal_bL33"/>
</dbReference>
<dbReference type="InterPro" id="IPR018264">
    <property type="entry name" value="Ribosomal_bL33_CS"/>
</dbReference>
<dbReference type="InterPro" id="IPR038584">
    <property type="entry name" value="Ribosomal_bL33_sf"/>
</dbReference>
<dbReference type="InterPro" id="IPR011332">
    <property type="entry name" value="Ribosomal_zn-bd"/>
</dbReference>
<dbReference type="NCBIfam" id="NF001764">
    <property type="entry name" value="PRK00504.1"/>
    <property type="match status" value="1"/>
</dbReference>
<dbReference type="NCBIfam" id="NF001860">
    <property type="entry name" value="PRK00595.1"/>
    <property type="match status" value="1"/>
</dbReference>
<dbReference type="NCBIfam" id="TIGR01023">
    <property type="entry name" value="rpmG_bact"/>
    <property type="match status" value="1"/>
</dbReference>
<dbReference type="PANTHER" id="PTHR43168">
    <property type="entry name" value="50S RIBOSOMAL PROTEIN L33, CHLOROPLASTIC"/>
    <property type="match status" value="1"/>
</dbReference>
<dbReference type="PANTHER" id="PTHR43168:SF2">
    <property type="entry name" value="LARGE RIBOSOMAL SUBUNIT PROTEIN BL33C"/>
    <property type="match status" value="1"/>
</dbReference>
<dbReference type="Pfam" id="PF00471">
    <property type="entry name" value="Ribosomal_L33"/>
    <property type="match status" value="1"/>
</dbReference>
<dbReference type="SUPFAM" id="SSF57829">
    <property type="entry name" value="Zn-binding ribosomal proteins"/>
    <property type="match status" value="1"/>
</dbReference>
<dbReference type="PROSITE" id="PS00582">
    <property type="entry name" value="RIBOSOMAL_L33"/>
    <property type="match status" value="1"/>
</dbReference>